<organism>
    <name type="scientific">Sorangium cellulosum (strain So ce56)</name>
    <name type="common">Polyangium cellulosum (strain So ce56)</name>
    <dbReference type="NCBI Taxonomy" id="448385"/>
    <lineage>
        <taxon>Bacteria</taxon>
        <taxon>Pseudomonadati</taxon>
        <taxon>Myxococcota</taxon>
        <taxon>Polyangia</taxon>
        <taxon>Polyangiales</taxon>
        <taxon>Polyangiaceae</taxon>
        <taxon>Sorangium</taxon>
    </lineage>
</organism>
<protein>
    <recommendedName>
        <fullName evidence="1">Cobyric acid synthase</fullName>
    </recommendedName>
</protein>
<keyword id="KW-0169">Cobalamin biosynthesis</keyword>
<keyword id="KW-0315">Glutamine amidotransferase</keyword>
<keyword id="KW-1185">Reference proteome</keyword>
<dbReference type="EMBL" id="AM746676">
    <property type="protein sequence ID" value="CAN90367.1"/>
    <property type="molecule type" value="Genomic_DNA"/>
</dbReference>
<dbReference type="RefSeq" id="WP_012232845.1">
    <property type="nucleotide sequence ID" value="NC_010162.1"/>
</dbReference>
<dbReference type="SMR" id="A9GM36"/>
<dbReference type="STRING" id="448385.sce0210"/>
<dbReference type="KEGG" id="scl:sce0210"/>
<dbReference type="eggNOG" id="COG1492">
    <property type="taxonomic scope" value="Bacteria"/>
</dbReference>
<dbReference type="HOGENOM" id="CLU_019250_2_2_7"/>
<dbReference type="OrthoDB" id="9808302at2"/>
<dbReference type="BioCyc" id="SCEL448385:SCE_RS01080-MONOMER"/>
<dbReference type="UniPathway" id="UPA00148"/>
<dbReference type="Proteomes" id="UP000002139">
    <property type="component" value="Chromosome"/>
</dbReference>
<dbReference type="GO" id="GO:0015420">
    <property type="term" value="F:ABC-type vitamin B12 transporter activity"/>
    <property type="evidence" value="ECO:0007669"/>
    <property type="project" value="UniProtKB-UniRule"/>
</dbReference>
<dbReference type="GO" id="GO:0003824">
    <property type="term" value="F:catalytic activity"/>
    <property type="evidence" value="ECO:0007669"/>
    <property type="project" value="InterPro"/>
</dbReference>
<dbReference type="GO" id="GO:0009236">
    <property type="term" value="P:cobalamin biosynthetic process"/>
    <property type="evidence" value="ECO:0007669"/>
    <property type="project" value="UniProtKB-UniRule"/>
</dbReference>
<dbReference type="CDD" id="cd05389">
    <property type="entry name" value="CobQ_N"/>
    <property type="match status" value="1"/>
</dbReference>
<dbReference type="CDD" id="cd01750">
    <property type="entry name" value="GATase1_CobQ"/>
    <property type="match status" value="1"/>
</dbReference>
<dbReference type="Gene3D" id="3.40.50.880">
    <property type="match status" value="1"/>
</dbReference>
<dbReference type="Gene3D" id="3.40.50.300">
    <property type="entry name" value="P-loop containing nucleotide triphosphate hydrolases"/>
    <property type="match status" value="1"/>
</dbReference>
<dbReference type="HAMAP" id="MF_00028">
    <property type="entry name" value="CobQ"/>
    <property type="match status" value="1"/>
</dbReference>
<dbReference type="InterPro" id="IPR029062">
    <property type="entry name" value="Class_I_gatase-like"/>
</dbReference>
<dbReference type="InterPro" id="IPR002586">
    <property type="entry name" value="CobQ/CobB/MinD/ParA_Nub-bd_dom"/>
</dbReference>
<dbReference type="InterPro" id="IPR033949">
    <property type="entry name" value="CobQ_GATase1"/>
</dbReference>
<dbReference type="InterPro" id="IPR047045">
    <property type="entry name" value="CobQ_N"/>
</dbReference>
<dbReference type="InterPro" id="IPR004459">
    <property type="entry name" value="CobQ_synth"/>
</dbReference>
<dbReference type="InterPro" id="IPR011698">
    <property type="entry name" value="GATase_3"/>
</dbReference>
<dbReference type="InterPro" id="IPR027417">
    <property type="entry name" value="P-loop_NTPase"/>
</dbReference>
<dbReference type="NCBIfam" id="TIGR00313">
    <property type="entry name" value="cobQ"/>
    <property type="match status" value="1"/>
</dbReference>
<dbReference type="NCBIfam" id="NF001989">
    <property type="entry name" value="PRK00784.1"/>
    <property type="match status" value="1"/>
</dbReference>
<dbReference type="PANTHER" id="PTHR21343:SF1">
    <property type="entry name" value="COBYRIC ACID SYNTHASE"/>
    <property type="match status" value="1"/>
</dbReference>
<dbReference type="PANTHER" id="PTHR21343">
    <property type="entry name" value="DETHIOBIOTIN SYNTHETASE"/>
    <property type="match status" value="1"/>
</dbReference>
<dbReference type="Pfam" id="PF01656">
    <property type="entry name" value="CbiA"/>
    <property type="match status" value="1"/>
</dbReference>
<dbReference type="Pfam" id="PF07685">
    <property type="entry name" value="GATase_3"/>
    <property type="match status" value="1"/>
</dbReference>
<dbReference type="SUPFAM" id="SSF52317">
    <property type="entry name" value="Class I glutamine amidotransferase-like"/>
    <property type="match status" value="1"/>
</dbReference>
<dbReference type="SUPFAM" id="SSF52540">
    <property type="entry name" value="P-loop containing nucleoside triphosphate hydrolases"/>
    <property type="match status" value="1"/>
</dbReference>
<dbReference type="PROSITE" id="PS51274">
    <property type="entry name" value="GATASE_COBBQ"/>
    <property type="match status" value="1"/>
</dbReference>
<comment type="function">
    <text evidence="1">Catalyzes amidations at positions B, D, E, and G on adenosylcobyrinic A,C-diamide. NH(2) groups are provided by glutamine, and one molecule of ATP is hydrogenolyzed for each amidation.</text>
</comment>
<comment type="pathway">
    <text evidence="1">Cofactor biosynthesis; adenosylcobalamin biosynthesis.</text>
</comment>
<comment type="similarity">
    <text evidence="1">Belongs to the CobB/CobQ family. CobQ subfamily.</text>
</comment>
<reference key="1">
    <citation type="journal article" date="2007" name="Nat. Biotechnol.">
        <title>Complete genome sequence of the myxobacterium Sorangium cellulosum.</title>
        <authorList>
            <person name="Schneiker S."/>
            <person name="Perlova O."/>
            <person name="Kaiser O."/>
            <person name="Gerth K."/>
            <person name="Alici A."/>
            <person name="Altmeyer M.O."/>
            <person name="Bartels D."/>
            <person name="Bekel T."/>
            <person name="Beyer S."/>
            <person name="Bode E."/>
            <person name="Bode H.B."/>
            <person name="Bolten C.J."/>
            <person name="Choudhuri J.V."/>
            <person name="Doss S."/>
            <person name="Elnakady Y.A."/>
            <person name="Frank B."/>
            <person name="Gaigalat L."/>
            <person name="Goesmann A."/>
            <person name="Groeger C."/>
            <person name="Gross F."/>
            <person name="Jelsbak L."/>
            <person name="Jelsbak L."/>
            <person name="Kalinowski J."/>
            <person name="Kegler C."/>
            <person name="Knauber T."/>
            <person name="Konietzny S."/>
            <person name="Kopp M."/>
            <person name="Krause L."/>
            <person name="Krug D."/>
            <person name="Linke B."/>
            <person name="Mahmud T."/>
            <person name="Martinez-Arias R."/>
            <person name="McHardy A.C."/>
            <person name="Merai M."/>
            <person name="Meyer F."/>
            <person name="Mormann S."/>
            <person name="Munoz-Dorado J."/>
            <person name="Perez J."/>
            <person name="Pradella S."/>
            <person name="Rachid S."/>
            <person name="Raddatz G."/>
            <person name="Rosenau F."/>
            <person name="Rueckert C."/>
            <person name="Sasse F."/>
            <person name="Scharfe M."/>
            <person name="Schuster S.C."/>
            <person name="Suen G."/>
            <person name="Treuner-Lange A."/>
            <person name="Velicer G.J."/>
            <person name="Vorholter F.-J."/>
            <person name="Weissman K.J."/>
            <person name="Welch R.D."/>
            <person name="Wenzel S.C."/>
            <person name="Whitworth D.E."/>
            <person name="Wilhelm S."/>
            <person name="Wittmann C."/>
            <person name="Bloecker H."/>
            <person name="Puehler A."/>
            <person name="Mueller R."/>
        </authorList>
    </citation>
    <scope>NUCLEOTIDE SEQUENCE [LARGE SCALE GENOMIC DNA]</scope>
    <source>
        <strain>So ce56</strain>
    </source>
</reference>
<sequence length="520" mass="54874">MTALTVMVQGTASSVGKSLLCAALCRIFQRRGLRVAPFKSQNMALNSFATLDGGEIGRAQAVQAEAARVAPTVDMNPVLLKPEGDSRSQVIVLGKPIGSLHARDYFAYRGELKDIIARSLGRLREAHDVVVIEGAGSPAEINLKDRDIVNMHVARAADAPVLLAGDIDRGGVFAALVGTMALLEPDERARVAAFVINKFRGDLKLLEPGLDMLTARTGVPVLGVVPYLKQLRIADEDSVSLEGRRRRAPAGPGELDIAVVRLPRISNYDDVEPLEHEPGVVVRFIERPDEIGNADLVLLPGTKSTMADLAWLRASGLAEAVAARARQGGWTLGICGGCQMLGGAIEDPEGVESAEPAARGLGLLDVWTRFERTKTVAQVRARLAGGSFLGPAGAVNAGEAEGEGAGELTGYEIHMGRVERVGGAAAAFAIGSRGGKAEPALDGAVSADGAVVGTMIHGILDNDGLRRSLLAALRERRGLPRAAGEPAIPSRHEEYDRLANAVEASLDRALLDRIVGLDRR</sequence>
<name>COBQ_SORC5</name>
<gene>
    <name evidence="1" type="primary">cobQ</name>
    <name type="ordered locus">sce0210</name>
</gene>
<proteinExistence type="inferred from homology"/>
<accession>A9GM36</accession>
<evidence type="ECO:0000255" key="1">
    <source>
        <dbReference type="HAMAP-Rule" id="MF_00028"/>
    </source>
</evidence>
<feature type="chain" id="PRO_0000332388" description="Cobyric acid synthase">
    <location>
        <begin position="1"/>
        <end position="520"/>
    </location>
</feature>
<feature type="domain" description="GATase cobBQ-type" evidence="1">
    <location>
        <begin position="254"/>
        <end position="465"/>
    </location>
</feature>
<feature type="active site" description="Nucleophile" evidence="1">
    <location>
        <position position="335"/>
    </location>
</feature>
<feature type="active site" evidence="1">
    <location>
        <position position="457"/>
    </location>
</feature>